<name>FLGS_HELPY</name>
<accession>O25026</accession>
<reference key="1">
    <citation type="journal article" date="1997" name="Nature">
        <title>The complete genome sequence of the gastric pathogen Helicobacter pylori.</title>
        <authorList>
            <person name="Tomb J.-F."/>
            <person name="White O."/>
            <person name="Kerlavage A.R."/>
            <person name="Clayton R.A."/>
            <person name="Sutton G.G."/>
            <person name="Fleischmann R.D."/>
            <person name="Ketchum K.A."/>
            <person name="Klenk H.-P."/>
            <person name="Gill S.R."/>
            <person name="Dougherty B.A."/>
            <person name="Nelson K.E."/>
            <person name="Quackenbush J."/>
            <person name="Zhou L."/>
            <person name="Kirkness E.F."/>
            <person name="Peterson S.N."/>
            <person name="Loftus B.J."/>
            <person name="Richardson D.L."/>
            <person name="Dodson R.J."/>
            <person name="Khalak H.G."/>
            <person name="Glodek A."/>
            <person name="McKenney K."/>
            <person name="FitzGerald L.M."/>
            <person name="Lee N."/>
            <person name="Adams M.D."/>
            <person name="Hickey E.K."/>
            <person name="Berg D.E."/>
            <person name="Gocayne J.D."/>
            <person name="Utterback T.R."/>
            <person name="Peterson J.D."/>
            <person name="Kelley J.M."/>
            <person name="Cotton M.D."/>
            <person name="Weidman J.F."/>
            <person name="Fujii C."/>
            <person name="Bowman C."/>
            <person name="Watthey L."/>
            <person name="Wallin E."/>
            <person name="Hayes W.S."/>
            <person name="Borodovsky M."/>
            <person name="Karp P.D."/>
            <person name="Smith H.O."/>
            <person name="Fraser C.M."/>
            <person name="Venter J.C."/>
        </authorList>
    </citation>
    <scope>NUCLEOTIDE SEQUENCE [LARGE SCALE GENOMIC DNA]</scope>
    <source>
        <strain>ATCC 700392 / 26695</strain>
    </source>
</reference>
<reference key="2">
    <citation type="journal article" date="1999" name="J. Bacteriol.">
        <title>Motility of Helicobacter pylori is coordinately regulated by the transcriptional activator FlgR, an NtrC homolog.</title>
        <authorList>
            <person name="Spohn G."/>
            <person name="Scarlato V."/>
        </authorList>
    </citation>
    <scope>FUNCTION</scope>
</reference>
<reference key="3">
    <citation type="journal article" date="2000" name="J. Bacteriol.">
        <title>Molecular characterization of two-component systems of Helicobacter pylori.</title>
        <authorList>
            <person name="Beier D."/>
            <person name="Frank R."/>
        </authorList>
    </citation>
    <scope>FUNCTION</scope>
    <scope>CATALYTIC ACTIVITY</scope>
    <scope>AUTOPHOSPHORYLATION</scope>
</reference>
<reference key="4">
    <citation type="journal article" date="2005" name="Microbiol. Res.">
        <title>Protein-protein interaction of HP137 with histidine kinase HP244 does not contribute to flagellar regulation in Helicobacter pylori.</title>
        <authorList>
            <person name="Jimenez-Pearson M.A."/>
            <person name="Dietz P."/>
            <person name="Beier D."/>
        </authorList>
    </citation>
    <scope>FUNCTION</scope>
    <scope>CATALYTIC ACTIVITY</scope>
    <scope>AUTOPHOSPHORYLATION</scope>
    <source>
        <strain>G27</strain>
    </source>
</reference>
<reference key="5">
    <citation type="journal article" date="2009" name="J. Bacteriol.">
        <title>The pH-responsive regulon of HP0244 (FlgS), the cytoplasmic histidine kinase of Helicobacter pylori.</title>
        <authorList>
            <person name="Wen Y."/>
            <person name="Feng J."/>
            <person name="Scott D.R."/>
            <person name="Marcus E.A."/>
            <person name="Sachs G."/>
        </authorList>
    </citation>
    <scope>FUNCTION</scope>
    <scope>DISRUPTION PHENOTYPE</scope>
</reference>
<reference key="6">
    <citation type="journal article" date="2015" name="J. Bacteriol.">
        <title>Helicobacter pylori FlhA Binds the Sensor Kinase and Flagellar Gene Regulatory Protein FlgS with High Affinity.</title>
        <authorList>
            <person name="Tsang J."/>
            <person name="Hirano T."/>
            <person name="Hoover T.R."/>
            <person name="McMurry J.L."/>
        </authorList>
    </citation>
    <scope>FUNCTION</scope>
    <scope>INTERACTION WITH FLHA</scope>
    <source>
        <strain>ATCC 43504</strain>
    </source>
</reference>
<feature type="chain" id="PRO_0000448703" description="Sensor histidine kinase FlgS">
    <location>
        <begin position="1"/>
        <end position="381"/>
    </location>
</feature>
<feature type="domain" description="Histidine kinase" evidence="1">
    <location>
        <begin position="177"/>
        <end position="381"/>
    </location>
</feature>
<feature type="modified residue" description="Phosphohistidine; by autocatalysis" evidence="1">
    <location>
        <position position="180"/>
    </location>
</feature>
<sequence>MKKSKHLKRPYLKRSHLKHSDKASSFKGLLKKEDNVISLENFKPKESEDLLENFSNKKDMQELLGLLNQFILQSYKVEKEFKDYKALYEWVIEILPQAIWVVNENGSFFYKNSLANQSHEVFNKAKLENFNTEIEHENKSYLVQQNSIQGKQIITATDISAQKRQERLASMGKISAHLAHEIRNPVGSISLLASVLLKHANEKTKPIVVELQKALWRVERIIKATLLFSKGIQANRTKQSLKTLESDLKEALNCYTYSKDIDFLFNFSDEEGFFDFDLMGIVLQNFLYNAIDAIEALEESEQGQVKIEAFIQNEFIVFTIIDNGKEVENKSALFEPFETTKLKGNGLGLALSLQVVKAHEGSIALLENQEKTFEIKILNAS</sequence>
<gene>
    <name type="primary">flgS</name>
    <name type="ordered locus">HP_0244</name>
</gene>
<comment type="function">
    <text evidence="2 3 4 6">Member of the two-component regulatory system FlgR/FlgS that induces the transcriptional induction of the genes needed in motility and flagellar biogenesis (PubMed:9882675). Also plays an essential role in bacterial survival at pH 2.5 independently of FlgR (PubMed:18978046). Functions as a sensor protein kinase which is autophosphorylated at a histidine residue and transfers its phosphate group to the conserved aspartic acid residue in the regulatory domain of FlgR (PubMed:10735847, PubMed:16035242). In turn, FlgR functions as a transcriptional regulator initiating transcription from RpoN-dependent promoters (PubMed:10735847, PubMed:16035242).</text>
</comment>
<comment type="catalytic activity">
    <reaction evidence="2 3">
        <text>ATP + protein L-histidine = ADP + protein N-phospho-L-histidine.</text>
        <dbReference type="EC" id="2.7.13.3"/>
    </reaction>
</comment>
<comment type="subunit">
    <text evidence="5">Interacts (via its C-terminal kinase domain) with FlhA (via N-terminus).</text>
</comment>
<comment type="PTM">
    <text evidence="2 3">Autophosphorylated.</text>
</comment>
<comment type="disruption phenotype">
    <text evidence="4">Shows a pronounced survival defect at pH 2.5 not due to the nonmotile phenotype.</text>
</comment>
<organism>
    <name type="scientific">Helicobacter pylori (strain ATCC 700392 / 26695)</name>
    <name type="common">Campylobacter pylori</name>
    <dbReference type="NCBI Taxonomy" id="85962"/>
    <lineage>
        <taxon>Bacteria</taxon>
        <taxon>Pseudomonadati</taxon>
        <taxon>Campylobacterota</taxon>
        <taxon>Epsilonproteobacteria</taxon>
        <taxon>Campylobacterales</taxon>
        <taxon>Helicobacteraceae</taxon>
        <taxon>Helicobacter</taxon>
    </lineage>
</organism>
<proteinExistence type="evidence at protein level"/>
<dbReference type="EC" id="2.7.13.3" evidence="2 3"/>
<dbReference type="EMBL" id="AE000511">
    <property type="protein sequence ID" value="AAD07313.1"/>
    <property type="molecule type" value="Genomic_DNA"/>
</dbReference>
<dbReference type="PIR" id="D64550">
    <property type="entry name" value="D64550"/>
</dbReference>
<dbReference type="RefSeq" id="NP_207042.1">
    <property type="nucleotide sequence ID" value="NC_000915.1"/>
</dbReference>
<dbReference type="RefSeq" id="WP_000748581.1">
    <property type="nucleotide sequence ID" value="NC_018939.1"/>
</dbReference>
<dbReference type="SMR" id="O25026"/>
<dbReference type="DIP" id="DIP-3202N"/>
<dbReference type="FunCoup" id="O25026">
    <property type="interactions" value="226"/>
</dbReference>
<dbReference type="IntAct" id="O25026">
    <property type="interactions" value="5"/>
</dbReference>
<dbReference type="MINT" id="O25026"/>
<dbReference type="STRING" id="85962.HP_0244"/>
<dbReference type="PaxDb" id="85962-C694_01235"/>
<dbReference type="EnsemblBacteria" id="AAD07313">
    <property type="protein sequence ID" value="AAD07313"/>
    <property type="gene ID" value="HP_0244"/>
</dbReference>
<dbReference type="KEGG" id="heo:C694_01235"/>
<dbReference type="KEGG" id="hpy:HP_0244"/>
<dbReference type="PATRIC" id="fig|85962.47.peg.264"/>
<dbReference type="eggNOG" id="COG0642">
    <property type="taxonomic scope" value="Bacteria"/>
</dbReference>
<dbReference type="InParanoid" id="O25026"/>
<dbReference type="OrthoDB" id="9805967at2"/>
<dbReference type="PhylomeDB" id="O25026"/>
<dbReference type="BRENDA" id="2.7.13.3">
    <property type="organism ID" value="2604"/>
</dbReference>
<dbReference type="Proteomes" id="UP000000429">
    <property type="component" value="Chromosome"/>
</dbReference>
<dbReference type="GO" id="GO:0005524">
    <property type="term" value="F:ATP binding"/>
    <property type="evidence" value="ECO:0007669"/>
    <property type="project" value="UniProtKB-KW"/>
</dbReference>
<dbReference type="GO" id="GO:0000155">
    <property type="term" value="F:phosphorelay sensor kinase activity"/>
    <property type="evidence" value="ECO:0007669"/>
    <property type="project" value="InterPro"/>
</dbReference>
<dbReference type="CDD" id="cd00082">
    <property type="entry name" value="HisKA"/>
    <property type="match status" value="1"/>
</dbReference>
<dbReference type="Gene3D" id="1.10.287.130">
    <property type="match status" value="1"/>
</dbReference>
<dbReference type="Gene3D" id="3.30.565.10">
    <property type="entry name" value="Histidine kinase-like ATPase, C-terminal domain"/>
    <property type="match status" value="1"/>
</dbReference>
<dbReference type="InterPro" id="IPR036890">
    <property type="entry name" value="HATPase_C_sf"/>
</dbReference>
<dbReference type="InterPro" id="IPR005467">
    <property type="entry name" value="His_kinase_dom"/>
</dbReference>
<dbReference type="InterPro" id="IPR003661">
    <property type="entry name" value="HisK_dim/P_dom"/>
</dbReference>
<dbReference type="InterPro" id="IPR036097">
    <property type="entry name" value="HisK_dim/P_sf"/>
</dbReference>
<dbReference type="InterPro" id="IPR004358">
    <property type="entry name" value="Sig_transdc_His_kin-like_C"/>
</dbReference>
<dbReference type="PANTHER" id="PTHR43065:SF10">
    <property type="entry name" value="PEROXIDE STRESS-ACTIVATED HISTIDINE KINASE MAK3"/>
    <property type="match status" value="1"/>
</dbReference>
<dbReference type="PANTHER" id="PTHR43065">
    <property type="entry name" value="SENSOR HISTIDINE KINASE"/>
    <property type="match status" value="1"/>
</dbReference>
<dbReference type="Pfam" id="PF02518">
    <property type="entry name" value="HATPase_c"/>
    <property type="match status" value="1"/>
</dbReference>
<dbReference type="Pfam" id="PF00512">
    <property type="entry name" value="HisKA"/>
    <property type="match status" value="1"/>
</dbReference>
<dbReference type="PRINTS" id="PR00344">
    <property type="entry name" value="BCTRLSENSOR"/>
</dbReference>
<dbReference type="SMART" id="SM00387">
    <property type="entry name" value="HATPase_c"/>
    <property type="match status" value="1"/>
</dbReference>
<dbReference type="SMART" id="SM00388">
    <property type="entry name" value="HisKA"/>
    <property type="match status" value="1"/>
</dbReference>
<dbReference type="SUPFAM" id="SSF55874">
    <property type="entry name" value="ATPase domain of HSP90 chaperone/DNA topoisomerase II/histidine kinase"/>
    <property type="match status" value="1"/>
</dbReference>
<dbReference type="SUPFAM" id="SSF47384">
    <property type="entry name" value="Homodimeric domain of signal transducing histidine kinase"/>
    <property type="match status" value="1"/>
</dbReference>
<dbReference type="PROSITE" id="PS50109">
    <property type="entry name" value="HIS_KIN"/>
    <property type="match status" value="1"/>
</dbReference>
<evidence type="ECO:0000255" key="1">
    <source>
        <dbReference type="PROSITE-ProRule" id="PRU00107"/>
    </source>
</evidence>
<evidence type="ECO:0000269" key="2">
    <source>
    </source>
</evidence>
<evidence type="ECO:0000269" key="3">
    <source>
    </source>
</evidence>
<evidence type="ECO:0000269" key="4">
    <source>
    </source>
</evidence>
<evidence type="ECO:0000269" key="5">
    <source>
    </source>
</evidence>
<evidence type="ECO:0000269" key="6">
    <source>
    </source>
</evidence>
<keyword id="KW-0067">ATP-binding</keyword>
<keyword id="KW-0418">Kinase</keyword>
<keyword id="KW-0547">Nucleotide-binding</keyword>
<keyword id="KW-0597">Phosphoprotein</keyword>
<keyword id="KW-1185">Reference proteome</keyword>
<keyword id="KW-0808">Transferase</keyword>
<keyword id="KW-0902">Two-component regulatory system</keyword>
<protein>
    <recommendedName>
        <fullName>Sensor histidine kinase FlgS</fullName>
        <ecNumber evidence="2 3">2.7.13.3</ecNumber>
    </recommendedName>
</protein>